<keyword id="KW-0961">Cell wall biogenesis/degradation</keyword>
<keyword id="KW-0963">Cytoplasm</keyword>
<keyword id="KW-0596">Phosphopantetheine</keyword>
<keyword id="KW-0597">Phosphoprotein</keyword>
<dbReference type="EMBL" id="FM211187">
    <property type="protein sequence ID" value="CAR69939.1"/>
    <property type="molecule type" value="Genomic_DNA"/>
</dbReference>
<dbReference type="RefSeq" id="WP_000351967.1">
    <property type="nucleotide sequence ID" value="NC_011900.1"/>
</dbReference>
<dbReference type="SMR" id="B8ZQ12"/>
<dbReference type="GeneID" id="93738863"/>
<dbReference type="KEGG" id="sne:SPN23F22070"/>
<dbReference type="HOGENOM" id="CLU_108696_19_0_9"/>
<dbReference type="UniPathway" id="UPA00556"/>
<dbReference type="GO" id="GO:0005737">
    <property type="term" value="C:cytoplasm"/>
    <property type="evidence" value="ECO:0007669"/>
    <property type="project" value="UniProtKB-SubCell"/>
</dbReference>
<dbReference type="GO" id="GO:0036370">
    <property type="term" value="F:D-alanyl carrier activity"/>
    <property type="evidence" value="ECO:0007669"/>
    <property type="project" value="UniProtKB-UniRule"/>
</dbReference>
<dbReference type="GO" id="GO:0071555">
    <property type="term" value="P:cell wall organization"/>
    <property type="evidence" value="ECO:0007669"/>
    <property type="project" value="UniProtKB-KW"/>
</dbReference>
<dbReference type="GO" id="GO:0070395">
    <property type="term" value="P:lipoteichoic acid biosynthetic process"/>
    <property type="evidence" value="ECO:0007669"/>
    <property type="project" value="UniProtKB-UniRule"/>
</dbReference>
<dbReference type="Gene3D" id="1.10.1200.10">
    <property type="entry name" value="ACP-like"/>
    <property type="match status" value="1"/>
</dbReference>
<dbReference type="HAMAP" id="MF_00565">
    <property type="entry name" value="DltC"/>
    <property type="match status" value="1"/>
</dbReference>
<dbReference type="InterPro" id="IPR036736">
    <property type="entry name" value="ACP-like_sf"/>
</dbReference>
<dbReference type="InterPro" id="IPR003230">
    <property type="entry name" value="DltC"/>
</dbReference>
<dbReference type="InterPro" id="IPR009081">
    <property type="entry name" value="PP-bd_ACP"/>
</dbReference>
<dbReference type="NCBIfam" id="TIGR01688">
    <property type="entry name" value="dltC"/>
    <property type="match status" value="1"/>
</dbReference>
<dbReference type="NCBIfam" id="NF003464">
    <property type="entry name" value="PRK05087.1"/>
    <property type="match status" value="1"/>
</dbReference>
<dbReference type="Pfam" id="PF00550">
    <property type="entry name" value="PP-binding"/>
    <property type="match status" value="1"/>
</dbReference>
<dbReference type="SUPFAM" id="SSF47336">
    <property type="entry name" value="ACP-like"/>
    <property type="match status" value="1"/>
</dbReference>
<dbReference type="PROSITE" id="PS50075">
    <property type="entry name" value="CARRIER"/>
    <property type="match status" value="1"/>
</dbReference>
<comment type="function">
    <text evidence="1">Carrier protein involved in the D-alanylation of lipoteichoic acid (LTA). The loading of thioester-linked D-alanine onto DltC is catalyzed by D-alanine--D-alanyl carrier protein ligase DltA. The DltC-carried D-alanyl group is further transferred to cell membrane phosphatidylglycerol (PG) by forming an ester bond, probably catalyzed by DltD. D-alanylation of LTA plays an important role in modulating the properties of the cell wall in Gram-positive bacteria, influencing the net charge of the cell wall.</text>
</comment>
<comment type="pathway">
    <text evidence="1">Cell wall biogenesis; lipoteichoic acid biosynthesis.</text>
</comment>
<comment type="subcellular location">
    <subcellularLocation>
        <location evidence="1">Cytoplasm</location>
    </subcellularLocation>
</comment>
<comment type="PTM">
    <text evidence="1">4'-phosphopantetheine is transferred from CoA to a specific serine of apo-DCP.</text>
</comment>
<comment type="similarity">
    <text evidence="1">Belongs to the DltC family.</text>
</comment>
<proteinExistence type="inferred from homology"/>
<reference key="1">
    <citation type="journal article" date="2009" name="J. Bacteriol.">
        <title>Role of conjugative elements in the evolution of the multidrug-resistant pandemic clone Streptococcus pneumoniae Spain23F ST81.</title>
        <authorList>
            <person name="Croucher N.J."/>
            <person name="Walker D."/>
            <person name="Romero P."/>
            <person name="Lennard N."/>
            <person name="Paterson G.K."/>
            <person name="Bason N.C."/>
            <person name="Mitchell A.M."/>
            <person name="Quail M.A."/>
            <person name="Andrew P.W."/>
            <person name="Parkhill J."/>
            <person name="Bentley S.D."/>
            <person name="Mitchell T.J."/>
        </authorList>
    </citation>
    <scope>NUCLEOTIDE SEQUENCE [LARGE SCALE GENOMIC DNA]</scope>
    <source>
        <strain>ATCC 700669 / Spain 23F-1</strain>
    </source>
</reference>
<gene>
    <name evidence="1" type="primary">dltC</name>
    <name type="ordered locus">SPN23F22070</name>
</gene>
<protein>
    <recommendedName>
        <fullName evidence="1">D-alanyl carrier protein</fullName>
        <shortName evidence="1">DCP</shortName>
    </recommendedName>
    <alternativeName>
        <fullName evidence="1">D-alanine--poly(phosphoribitol) ligase subunit 2</fullName>
    </alternativeName>
</protein>
<name>DLTC_STRPJ</name>
<feature type="chain" id="PRO_1000146798" description="D-alanyl carrier protein">
    <location>
        <begin position="1"/>
        <end position="79"/>
    </location>
</feature>
<feature type="domain" description="Carrier" evidence="1">
    <location>
        <begin position="1"/>
        <end position="77"/>
    </location>
</feature>
<feature type="modified residue" description="O-(pantetheine 4'-phosphoryl)serine" evidence="1">
    <location>
        <position position="35"/>
    </location>
</feature>
<evidence type="ECO:0000255" key="1">
    <source>
        <dbReference type="HAMAP-Rule" id="MF_00565"/>
    </source>
</evidence>
<organism>
    <name type="scientific">Streptococcus pneumoniae (strain ATCC 700669 / Spain 23F-1)</name>
    <dbReference type="NCBI Taxonomy" id="561276"/>
    <lineage>
        <taxon>Bacteria</taxon>
        <taxon>Bacillati</taxon>
        <taxon>Bacillota</taxon>
        <taxon>Bacilli</taxon>
        <taxon>Lactobacillales</taxon>
        <taxon>Streptococcaceae</taxon>
        <taxon>Streptococcus</taxon>
    </lineage>
</organism>
<sequence length="79" mass="8980">MDIKSEVIEIIDELFMEDVSDMMDEDLFDAGVLDSMGTVELIVEIENRFDIRVPVTEFGRDDWNTANKIIAGIVELQNA</sequence>
<accession>B8ZQ12</accession>